<name>RL52_ORYSJ</name>
<keyword id="KW-0963">Cytoplasm</keyword>
<keyword id="KW-0539">Nucleus</keyword>
<keyword id="KW-1185">Reference proteome</keyword>
<keyword id="KW-0687">Ribonucleoprotein</keyword>
<keyword id="KW-0689">Ribosomal protein</keyword>
<keyword id="KW-0694">RNA-binding</keyword>
<keyword id="KW-0699">rRNA-binding</keyword>
<proteinExistence type="evidence at transcript level"/>
<organism>
    <name type="scientific">Oryza sativa subsp. japonica</name>
    <name type="common">Rice</name>
    <dbReference type="NCBI Taxonomy" id="39947"/>
    <lineage>
        <taxon>Eukaryota</taxon>
        <taxon>Viridiplantae</taxon>
        <taxon>Streptophyta</taxon>
        <taxon>Embryophyta</taxon>
        <taxon>Tracheophyta</taxon>
        <taxon>Spermatophyta</taxon>
        <taxon>Magnoliopsida</taxon>
        <taxon>Liliopsida</taxon>
        <taxon>Poales</taxon>
        <taxon>Poaceae</taxon>
        <taxon>BOP clade</taxon>
        <taxon>Oryzoideae</taxon>
        <taxon>Oryzeae</taxon>
        <taxon>Oryzinae</taxon>
        <taxon>Oryza</taxon>
        <taxon>Oryza sativa</taxon>
    </lineage>
</organism>
<feature type="chain" id="PRO_0000131448" description="Large ribosomal subunit protein uL18y">
    <location>
        <begin position="1"/>
        <end position="304"/>
    </location>
</feature>
<comment type="function">
    <text evidence="1">Component of the ribosome, a large ribonucleoprotein complex responsible for the synthesis of proteins in the cell. The small ribosomal subunit (SSU) binds messenger RNAs (mRNAs) and translates the encoded message by selecting cognate aminoacyl-transfer RNA (tRNA) molecules. The large subunit (LSU) contains the ribosomal catalytic site termed the peptidyl transferase center (PTC), which catalyzes the formation of peptide bonds, thereby polymerizing the amino acids delivered by tRNAs into a polypeptide chain. The nascent polypeptides leave the ribosome through a tunnel in the LSU and interact with protein factors that function in enzymatic processing, targeting, and the membrane insertion of nascent chains at the exit of the ribosomal tunnel.</text>
</comment>
<comment type="subunit">
    <text evidence="1">Component of the large ribosomal subunit (LSU).</text>
</comment>
<comment type="subcellular location">
    <subcellularLocation>
        <location evidence="1">Cytoplasm</location>
    </subcellularLocation>
    <subcellularLocation>
        <location evidence="1">Nucleus</location>
    </subcellularLocation>
</comment>
<comment type="similarity">
    <text evidence="2">Belongs to the universal ribosomal protein uL18 family.</text>
</comment>
<protein>
    <recommendedName>
        <fullName evidence="2">Large ribosomal subunit protein uL18y</fullName>
    </recommendedName>
    <alternativeName>
        <fullName>60S ribosomal protein L5-2</fullName>
    </alternativeName>
</protein>
<reference key="1">
    <citation type="submission" date="2007-11" db="EMBL/GenBank/DDBJ databases">
        <title>Molecular cloning of the 60S ribosomal protein L5 genes in rice.</title>
        <authorList>
            <person name="Yoon U.H."/>
            <person name="Kim Y.H."/>
        </authorList>
    </citation>
    <scope>NUCLEOTIDE SEQUENCE [MRNA]</scope>
    <source>
        <strain>cv. Ilpoombyeo</strain>
    </source>
</reference>
<reference key="2">
    <citation type="journal article" date="2002" name="Nature">
        <title>The genome sequence and structure of rice chromosome 1.</title>
        <authorList>
            <person name="Sasaki T."/>
            <person name="Matsumoto T."/>
            <person name="Yamamoto K."/>
            <person name="Sakata K."/>
            <person name="Baba T."/>
            <person name="Katayose Y."/>
            <person name="Wu J."/>
            <person name="Niimura Y."/>
            <person name="Cheng Z."/>
            <person name="Nagamura Y."/>
            <person name="Antonio B.A."/>
            <person name="Kanamori H."/>
            <person name="Hosokawa S."/>
            <person name="Masukawa M."/>
            <person name="Arikawa K."/>
            <person name="Chiden Y."/>
            <person name="Hayashi M."/>
            <person name="Okamoto M."/>
            <person name="Ando T."/>
            <person name="Aoki H."/>
            <person name="Arita K."/>
            <person name="Hamada M."/>
            <person name="Harada C."/>
            <person name="Hijishita S."/>
            <person name="Honda M."/>
            <person name="Ichikawa Y."/>
            <person name="Idonuma A."/>
            <person name="Iijima M."/>
            <person name="Ikeda M."/>
            <person name="Ikeno M."/>
            <person name="Ito S."/>
            <person name="Ito T."/>
            <person name="Ito Y."/>
            <person name="Ito Y."/>
            <person name="Iwabuchi A."/>
            <person name="Kamiya K."/>
            <person name="Karasawa W."/>
            <person name="Katagiri S."/>
            <person name="Kikuta A."/>
            <person name="Kobayashi N."/>
            <person name="Kono I."/>
            <person name="Machita K."/>
            <person name="Maehara T."/>
            <person name="Mizuno H."/>
            <person name="Mizubayashi T."/>
            <person name="Mukai Y."/>
            <person name="Nagasaki H."/>
            <person name="Nakashima M."/>
            <person name="Nakama Y."/>
            <person name="Nakamichi Y."/>
            <person name="Nakamura M."/>
            <person name="Namiki N."/>
            <person name="Negishi M."/>
            <person name="Ohta I."/>
            <person name="Ono N."/>
            <person name="Saji S."/>
            <person name="Sakai K."/>
            <person name="Shibata M."/>
            <person name="Shimokawa T."/>
            <person name="Shomura A."/>
            <person name="Song J."/>
            <person name="Takazaki Y."/>
            <person name="Terasawa K."/>
            <person name="Tsuji K."/>
            <person name="Waki K."/>
            <person name="Yamagata H."/>
            <person name="Yamane H."/>
            <person name="Yoshiki S."/>
            <person name="Yoshihara R."/>
            <person name="Yukawa K."/>
            <person name="Zhong H."/>
            <person name="Iwama H."/>
            <person name="Endo T."/>
            <person name="Ito H."/>
            <person name="Hahn J.H."/>
            <person name="Kim H.-I."/>
            <person name="Eun M.-Y."/>
            <person name="Yano M."/>
            <person name="Jiang J."/>
            <person name="Gojobori T."/>
        </authorList>
    </citation>
    <scope>NUCLEOTIDE SEQUENCE [LARGE SCALE GENOMIC DNA]</scope>
    <source>
        <strain>cv. Nipponbare</strain>
    </source>
</reference>
<reference key="3">
    <citation type="journal article" date="2005" name="Nature">
        <title>The map-based sequence of the rice genome.</title>
        <authorList>
            <consortium name="International rice genome sequencing project (IRGSP)"/>
        </authorList>
    </citation>
    <scope>NUCLEOTIDE SEQUENCE [LARGE SCALE GENOMIC DNA]</scope>
    <source>
        <strain>cv. Nipponbare</strain>
    </source>
</reference>
<reference key="4">
    <citation type="journal article" date="2013" name="Rice">
        <title>Improvement of the Oryza sativa Nipponbare reference genome using next generation sequence and optical map data.</title>
        <authorList>
            <person name="Kawahara Y."/>
            <person name="de la Bastide M."/>
            <person name="Hamilton J.P."/>
            <person name="Kanamori H."/>
            <person name="McCombie W.R."/>
            <person name="Ouyang S."/>
            <person name="Schwartz D.C."/>
            <person name="Tanaka T."/>
            <person name="Wu J."/>
            <person name="Zhou S."/>
            <person name="Childs K.L."/>
            <person name="Davidson R.M."/>
            <person name="Lin H."/>
            <person name="Quesada-Ocampo L."/>
            <person name="Vaillancourt B."/>
            <person name="Sakai H."/>
            <person name="Lee S.S."/>
            <person name="Kim J."/>
            <person name="Numa H."/>
            <person name="Itoh T."/>
            <person name="Buell C.R."/>
            <person name="Matsumoto T."/>
        </authorList>
    </citation>
    <scope>GENOME REANNOTATION</scope>
    <source>
        <strain>cv. Nipponbare</strain>
    </source>
</reference>
<reference key="5">
    <citation type="journal article" date="2005" name="PLoS Biol.">
        <title>The genomes of Oryza sativa: a history of duplications.</title>
        <authorList>
            <person name="Yu J."/>
            <person name="Wang J."/>
            <person name="Lin W."/>
            <person name="Li S."/>
            <person name="Li H."/>
            <person name="Zhou J."/>
            <person name="Ni P."/>
            <person name="Dong W."/>
            <person name="Hu S."/>
            <person name="Zeng C."/>
            <person name="Zhang J."/>
            <person name="Zhang Y."/>
            <person name="Li R."/>
            <person name="Xu Z."/>
            <person name="Li S."/>
            <person name="Li X."/>
            <person name="Zheng H."/>
            <person name="Cong L."/>
            <person name="Lin L."/>
            <person name="Yin J."/>
            <person name="Geng J."/>
            <person name="Li G."/>
            <person name="Shi J."/>
            <person name="Liu J."/>
            <person name="Lv H."/>
            <person name="Li J."/>
            <person name="Wang J."/>
            <person name="Deng Y."/>
            <person name="Ran L."/>
            <person name="Shi X."/>
            <person name="Wang X."/>
            <person name="Wu Q."/>
            <person name="Li C."/>
            <person name="Ren X."/>
            <person name="Wang J."/>
            <person name="Wang X."/>
            <person name="Li D."/>
            <person name="Liu D."/>
            <person name="Zhang X."/>
            <person name="Ji Z."/>
            <person name="Zhao W."/>
            <person name="Sun Y."/>
            <person name="Zhang Z."/>
            <person name="Bao J."/>
            <person name="Han Y."/>
            <person name="Dong L."/>
            <person name="Ji J."/>
            <person name="Chen P."/>
            <person name="Wu S."/>
            <person name="Liu J."/>
            <person name="Xiao Y."/>
            <person name="Bu D."/>
            <person name="Tan J."/>
            <person name="Yang L."/>
            <person name="Ye C."/>
            <person name="Zhang J."/>
            <person name="Xu J."/>
            <person name="Zhou Y."/>
            <person name="Yu Y."/>
            <person name="Zhang B."/>
            <person name="Zhuang S."/>
            <person name="Wei H."/>
            <person name="Liu B."/>
            <person name="Lei M."/>
            <person name="Yu H."/>
            <person name="Li Y."/>
            <person name="Xu H."/>
            <person name="Wei S."/>
            <person name="He X."/>
            <person name="Fang L."/>
            <person name="Zhang Z."/>
            <person name="Zhang Y."/>
            <person name="Huang X."/>
            <person name="Su Z."/>
            <person name="Tong W."/>
            <person name="Li J."/>
            <person name="Tong Z."/>
            <person name="Li S."/>
            <person name="Ye J."/>
            <person name="Wang L."/>
            <person name="Fang L."/>
            <person name="Lei T."/>
            <person name="Chen C.-S."/>
            <person name="Chen H.-C."/>
            <person name="Xu Z."/>
            <person name="Li H."/>
            <person name="Huang H."/>
            <person name="Zhang F."/>
            <person name="Xu H."/>
            <person name="Li N."/>
            <person name="Zhao C."/>
            <person name="Li S."/>
            <person name="Dong L."/>
            <person name="Huang Y."/>
            <person name="Li L."/>
            <person name="Xi Y."/>
            <person name="Qi Q."/>
            <person name="Li W."/>
            <person name="Zhang B."/>
            <person name="Hu W."/>
            <person name="Zhang Y."/>
            <person name="Tian X."/>
            <person name="Jiao Y."/>
            <person name="Liang X."/>
            <person name="Jin J."/>
            <person name="Gao L."/>
            <person name="Zheng W."/>
            <person name="Hao B."/>
            <person name="Liu S.-M."/>
            <person name="Wang W."/>
            <person name="Yuan L."/>
            <person name="Cao M."/>
            <person name="McDermott J."/>
            <person name="Samudrala R."/>
            <person name="Wang J."/>
            <person name="Wong G.K.-S."/>
            <person name="Yang H."/>
        </authorList>
    </citation>
    <scope>NUCLEOTIDE SEQUENCE [LARGE SCALE GENOMIC DNA]</scope>
    <source>
        <strain>cv. Nipponbare</strain>
    </source>
</reference>
<dbReference type="EMBL" id="EU267958">
    <property type="protein sequence ID" value="ACA50480.1"/>
    <property type="molecule type" value="mRNA"/>
</dbReference>
<dbReference type="EMBL" id="AP003316">
    <property type="protein sequence ID" value="BAC06272.1"/>
    <property type="molecule type" value="Genomic_DNA"/>
</dbReference>
<dbReference type="EMBL" id="AP003349">
    <property type="protein sequence ID" value="BAD82173.1"/>
    <property type="molecule type" value="Genomic_DNA"/>
</dbReference>
<dbReference type="EMBL" id="AP014957">
    <property type="protein sequence ID" value="BAS75705.1"/>
    <property type="molecule type" value="Genomic_DNA"/>
</dbReference>
<dbReference type="EMBL" id="CM000138">
    <property type="protein sequence ID" value="EEE55807.1"/>
    <property type="molecule type" value="Genomic_DNA"/>
</dbReference>
<dbReference type="RefSeq" id="XP_015614983.1">
    <property type="nucleotide sequence ID" value="XM_015759497.1"/>
</dbReference>
<dbReference type="SMR" id="Q8L4L4"/>
<dbReference type="FunCoup" id="Q8L4L4">
    <property type="interactions" value="2770"/>
</dbReference>
<dbReference type="STRING" id="39947.Q8L4L4"/>
<dbReference type="PaxDb" id="39947-Q8L4L4"/>
<dbReference type="EnsemblPlants" id="Os01t0896700-00">
    <property type="protein sequence ID" value="Os01t0896700-00"/>
    <property type="gene ID" value="Os01g0896700"/>
</dbReference>
<dbReference type="Gramene" id="Os01t0896700-00">
    <property type="protein sequence ID" value="Os01t0896700-00"/>
    <property type="gene ID" value="Os01g0896700"/>
</dbReference>
<dbReference type="eggNOG" id="KOG0875">
    <property type="taxonomic scope" value="Eukaryota"/>
</dbReference>
<dbReference type="InParanoid" id="Q8L4L4"/>
<dbReference type="OMA" id="CQIASAH"/>
<dbReference type="OrthoDB" id="1618453at2759"/>
<dbReference type="Proteomes" id="UP000000763">
    <property type="component" value="Chromosome 1"/>
</dbReference>
<dbReference type="Proteomes" id="UP000007752">
    <property type="component" value="Chromosome 1"/>
</dbReference>
<dbReference type="Proteomes" id="UP000059680">
    <property type="component" value="Chromosome 1"/>
</dbReference>
<dbReference type="GO" id="GO:0022625">
    <property type="term" value="C:cytosolic large ribosomal subunit"/>
    <property type="evidence" value="ECO:0000318"/>
    <property type="project" value="GO_Central"/>
</dbReference>
<dbReference type="GO" id="GO:0005634">
    <property type="term" value="C:nucleus"/>
    <property type="evidence" value="ECO:0007669"/>
    <property type="project" value="UniProtKB-SubCell"/>
</dbReference>
<dbReference type="GO" id="GO:0008097">
    <property type="term" value="F:5S rRNA binding"/>
    <property type="evidence" value="ECO:0000318"/>
    <property type="project" value="GO_Central"/>
</dbReference>
<dbReference type="GO" id="GO:0003735">
    <property type="term" value="F:structural constituent of ribosome"/>
    <property type="evidence" value="ECO:0000318"/>
    <property type="project" value="GO_Central"/>
</dbReference>
<dbReference type="GO" id="GO:0000027">
    <property type="term" value="P:ribosomal large subunit assembly"/>
    <property type="evidence" value="ECO:0000318"/>
    <property type="project" value="GO_Central"/>
</dbReference>
<dbReference type="GO" id="GO:0006412">
    <property type="term" value="P:translation"/>
    <property type="evidence" value="ECO:0007669"/>
    <property type="project" value="InterPro"/>
</dbReference>
<dbReference type="CDD" id="cd00432">
    <property type="entry name" value="Ribosomal_L18_L5e"/>
    <property type="match status" value="1"/>
</dbReference>
<dbReference type="FunFam" id="3.30.420.100:FF:000002">
    <property type="entry name" value="60S ribosomal protein L5"/>
    <property type="match status" value="1"/>
</dbReference>
<dbReference type="Gene3D" id="3.30.420.100">
    <property type="match status" value="1"/>
</dbReference>
<dbReference type="HAMAP" id="MF_01337_A">
    <property type="entry name" value="Ribosomal_uL18_A"/>
    <property type="match status" value="1"/>
</dbReference>
<dbReference type="InterPro" id="IPR005485">
    <property type="entry name" value="Rbsml_uL18_euk"/>
</dbReference>
<dbReference type="InterPro" id="IPR025607">
    <property type="entry name" value="Ribosomal_uL18_C_euk"/>
</dbReference>
<dbReference type="PANTHER" id="PTHR23410:SF12">
    <property type="entry name" value="LARGE RIBOSOMAL SUBUNIT PROTEIN UL18"/>
    <property type="match status" value="1"/>
</dbReference>
<dbReference type="PANTHER" id="PTHR23410">
    <property type="entry name" value="RIBOSOMAL PROTEIN L5-RELATED"/>
    <property type="match status" value="1"/>
</dbReference>
<dbReference type="Pfam" id="PF14204">
    <property type="entry name" value="Ribosomal_L18_c"/>
    <property type="match status" value="1"/>
</dbReference>
<dbReference type="Pfam" id="PF17144">
    <property type="entry name" value="Ribosomal_L5e"/>
    <property type="match status" value="1"/>
</dbReference>
<dbReference type="PRINTS" id="PR00058">
    <property type="entry name" value="RIBOSOMALL5"/>
</dbReference>
<dbReference type="SUPFAM" id="SSF53137">
    <property type="entry name" value="Translational machinery components"/>
    <property type="match status" value="1"/>
</dbReference>
<accession>Q8L4L4</accession>
<accession>B7SDE4</accession>
<accession>Q5N8N3</accession>
<evidence type="ECO:0000250" key="1">
    <source>
        <dbReference type="UniProtKB" id="P26321"/>
    </source>
</evidence>
<evidence type="ECO:0000305" key="2"/>
<evidence type="ECO:0000312" key="3">
    <source>
        <dbReference type="EMBL" id="EEE55807.1"/>
    </source>
</evidence>
<gene>
    <name type="primary">RPL5B</name>
    <name type="ordered locus">Os01g0896700</name>
    <name type="ordered locus">LOC_Os01g67134</name>
    <name evidence="3" type="ORF">OsJ_04400</name>
    <name type="ORF">P0674H09.11</name>
    <name type="ORF">P0696G06.29</name>
</gene>
<sequence>MGGFVKTQKTHAYFKRFQVKFKRRRQGKTDYRARIRLTNQDKNKYNTPKYRFVVRFTNKDITAQIVYATIAGDIVMAAAYSHELPRYGLEVGLTNYAAAYCTGLLLARRVLTLRGLDQEYEGNVEATGEDYYVEPADERRPFRALLDVGLIRTTTGNRVFGALKGALDGGLDIPHSDKRFAGFKKDEKQLDSDIHRKYIYGGHVADYMRSMAEEEPEKFQAHFSEYLKKGIDADGMESLYKKVHAAIRADPTMAKSTKKEPATHKRYNLKKLTYEQRKASLVERLNALNSSAGADDDDEEEDDE</sequence>